<protein>
    <recommendedName>
        <fullName evidence="1">Putative membrane protein insertion efficiency factor</fullName>
    </recommendedName>
</protein>
<comment type="function">
    <text evidence="1">Could be involved in insertion of integral membrane proteins into the membrane.</text>
</comment>
<comment type="subcellular location">
    <subcellularLocation>
        <location evidence="1">Cell membrane</location>
        <topology evidence="1">Peripheral membrane protein</topology>
        <orientation evidence="1">Cytoplasmic side</orientation>
    </subcellularLocation>
</comment>
<comment type="similarity">
    <text evidence="1">Belongs to the UPF0161 family.</text>
</comment>
<dbReference type="EMBL" id="CP000431">
    <property type="protein sequence ID" value="ABG95466.1"/>
    <property type="molecule type" value="Genomic_DNA"/>
</dbReference>
<dbReference type="RefSeq" id="WP_011596257.1">
    <property type="nucleotide sequence ID" value="NC_008268.1"/>
</dbReference>
<dbReference type="KEGG" id="rha:RHA1_ro03663"/>
<dbReference type="PATRIC" id="fig|101510.16.peg.3689"/>
<dbReference type="eggNOG" id="COG0759">
    <property type="taxonomic scope" value="Bacteria"/>
</dbReference>
<dbReference type="HOGENOM" id="CLU_144811_2_1_11"/>
<dbReference type="OrthoDB" id="9801753at2"/>
<dbReference type="Proteomes" id="UP000008710">
    <property type="component" value="Chromosome"/>
</dbReference>
<dbReference type="GO" id="GO:0005886">
    <property type="term" value="C:plasma membrane"/>
    <property type="evidence" value="ECO:0007669"/>
    <property type="project" value="UniProtKB-SubCell"/>
</dbReference>
<dbReference type="HAMAP" id="MF_00386">
    <property type="entry name" value="UPF0161_YidD"/>
    <property type="match status" value="1"/>
</dbReference>
<dbReference type="InterPro" id="IPR002696">
    <property type="entry name" value="Membr_insert_effic_factor_YidD"/>
</dbReference>
<dbReference type="NCBIfam" id="TIGR00278">
    <property type="entry name" value="membrane protein insertion efficiency factor YidD"/>
    <property type="match status" value="1"/>
</dbReference>
<dbReference type="PANTHER" id="PTHR33383">
    <property type="entry name" value="MEMBRANE PROTEIN INSERTION EFFICIENCY FACTOR-RELATED"/>
    <property type="match status" value="1"/>
</dbReference>
<dbReference type="PANTHER" id="PTHR33383:SF1">
    <property type="entry name" value="MEMBRANE PROTEIN INSERTION EFFICIENCY FACTOR-RELATED"/>
    <property type="match status" value="1"/>
</dbReference>
<dbReference type="Pfam" id="PF01809">
    <property type="entry name" value="YidD"/>
    <property type="match status" value="1"/>
</dbReference>
<dbReference type="SMART" id="SM01234">
    <property type="entry name" value="Haemolytic"/>
    <property type="match status" value="1"/>
</dbReference>
<sequence>MKSALHESRADTAEATSSASSAWKSVRALPARTLIFFIELYRTYVSPLRMPTCRFMPTCSEYAVESLRTHGVIKGLFLTVVRLAKCAPWHPGGWDPVPARRDRHAGGRRCCPANVDEQRST</sequence>
<organism>
    <name type="scientific">Rhodococcus jostii (strain RHA1)</name>
    <dbReference type="NCBI Taxonomy" id="101510"/>
    <lineage>
        <taxon>Bacteria</taxon>
        <taxon>Bacillati</taxon>
        <taxon>Actinomycetota</taxon>
        <taxon>Actinomycetes</taxon>
        <taxon>Mycobacteriales</taxon>
        <taxon>Nocardiaceae</taxon>
        <taxon>Rhodococcus</taxon>
    </lineage>
</organism>
<reference key="1">
    <citation type="journal article" date="2006" name="Proc. Natl. Acad. Sci. U.S.A.">
        <title>The complete genome of Rhodococcus sp. RHA1 provides insights into a catabolic powerhouse.</title>
        <authorList>
            <person name="McLeod M.P."/>
            <person name="Warren R.L."/>
            <person name="Hsiao W.W.L."/>
            <person name="Araki N."/>
            <person name="Myhre M."/>
            <person name="Fernandes C."/>
            <person name="Miyazawa D."/>
            <person name="Wong W."/>
            <person name="Lillquist A.L."/>
            <person name="Wang D."/>
            <person name="Dosanjh M."/>
            <person name="Hara H."/>
            <person name="Petrescu A."/>
            <person name="Morin R.D."/>
            <person name="Yang G."/>
            <person name="Stott J.M."/>
            <person name="Schein J.E."/>
            <person name="Shin H."/>
            <person name="Smailus D."/>
            <person name="Siddiqui A.S."/>
            <person name="Marra M.A."/>
            <person name="Jones S.J.M."/>
            <person name="Holt R."/>
            <person name="Brinkman F.S.L."/>
            <person name="Miyauchi K."/>
            <person name="Fukuda M."/>
            <person name="Davies J.E."/>
            <person name="Mohn W.W."/>
            <person name="Eltis L.D."/>
        </authorList>
    </citation>
    <scope>NUCLEOTIDE SEQUENCE [LARGE SCALE GENOMIC DNA]</scope>
    <source>
        <strain>RHA1</strain>
    </source>
</reference>
<name>YIDD_RHOJR</name>
<gene>
    <name type="ordered locus">RHA1_ro03663</name>
</gene>
<evidence type="ECO:0000255" key="1">
    <source>
        <dbReference type="HAMAP-Rule" id="MF_00386"/>
    </source>
</evidence>
<evidence type="ECO:0000256" key="2">
    <source>
        <dbReference type="SAM" id="MobiDB-lite"/>
    </source>
</evidence>
<proteinExistence type="inferred from homology"/>
<keyword id="KW-1003">Cell membrane</keyword>
<keyword id="KW-0472">Membrane</keyword>
<accession>Q0SAH0</accession>
<feature type="chain" id="PRO_0000253153" description="Putative membrane protein insertion efficiency factor">
    <location>
        <begin position="1"/>
        <end position="121"/>
    </location>
</feature>
<feature type="region of interest" description="Disordered" evidence="2">
    <location>
        <begin position="97"/>
        <end position="121"/>
    </location>
</feature>